<gene>
    <name evidence="1" type="primary">rpsH</name>
    <name type="ordered locus">Pfl01_5065</name>
</gene>
<feature type="chain" id="PRO_0000225883" description="Small ribosomal subunit protein uS8">
    <location>
        <begin position="1"/>
        <end position="130"/>
    </location>
</feature>
<evidence type="ECO:0000255" key="1">
    <source>
        <dbReference type="HAMAP-Rule" id="MF_01302"/>
    </source>
</evidence>
<evidence type="ECO:0000305" key="2"/>
<comment type="function">
    <text evidence="1">One of the primary rRNA binding proteins, it binds directly to 16S rRNA central domain where it helps coordinate assembly of the platform of the 30S subunit.</text>
</comment>
<comment type="subunit">
    <text evidence="1">Part of the 30S ribosomal subunit. Contacts proteins S5 and S12.</text>
</comment>
<comment type="similarity">
    <text evidence="1">Belongs to the universal ribosomal protein uS8 family.</text>
</comment>
<name>RS8_PSEPF</name>
<sequence length="130" mass="14117">MSMQDPLADMLTRIRNAQMAEKSVVSMPSSTLKVAVAKVLKDEGYIAGYQISSETKPLLSIELKYFEGRPVIEEVKRVSRPGLRQYKSVEELPKVRGGLGVSIVSTNKGVMTDRAARAAGVGGEVLCTVF</sequence>
<reference key="1">
    <citation type="journal article" date="2009" name="Genome Biol.">
        <title>Genomic and genetic analyses of diversity and plant interactions of Pseudomonas fluorescens.</title>
        <authorList>
            <person name="Silby M.W."/>
            <person name="Cerdeno-Tarraga A.M."/>
            <person name="Vernikos G.S."/>
            <person name="Giddens S.R."/>
            <person name="Jackson R.W."/>
            <person name="Preston G.M."/>
            <person name="Zhang X.-X."/>
            <person name="Moon C.D."/>
            <person name="Gehrig S.M."/>
            <person name="Godfrey S.A.C."/>
            <person name="Knight C.G."/>
            <person name="Malone J.G."/>
            <person name="Robinson Z."/>
            <person name="Spiers A.J."/>
            <person name="Harris S."/>
            <person name="Challis G.L."/>
            <person name="Yaxley A.M."/>
            <person name="Harris D."/>
            <person name="Seeger K."/>
            <person name="Murphy L."/>
            <person name="Rutter S."/>
            <person name="Squares R."/>
            <person name="Quail M.A."/>
            <person name="Saunders E."/>
            <person name="Mavromatis K."/>
            <person name="Brettin T.S."/>
            <person name="Bentley S.D."/>
            <person name="Hothersall J."/>
            <person name="Stephens E."/>
            <person name="Thomas C.M."/>
            <person name="Parkhill J."/>
            <person name="Levy S.B."/>
            <person name="Rainey P.B."/>
            <person name="Thomson N.R."/>
        </authorList>
    </citation>
    <scope>NUCLEOTIDE SEQUENCE [LARGE SCALE GENOMIC DNA]</scope>
    <source>
        <strain>Pf0-1</strain>
    </source>
</reference>
<accession>Q3K602</accession>
<protein>
    <recommendedName>
        <fullName evidence="1">Small ribosomal subunit protein uS8</fullName>
    </recommendedName>
    <alternativeName>
        <fullName evidence="2">30S ribosomal protein S8</fullName>
    </alternativeName>
</protein>
<organism>
    <name type="scientific">Pseudomonas fluorescens (strain Pf0-1)</name>
    <dbReference type="NCBI Taxonomy" id="205922"/>
    <lineage>
        <taxon>Bacteria</taxon>
        <taxon>Pseudomonadati</taxon>
        <taxon>Pseudomonadota</taxon>
        <taxon>Gammaproteobacteria</taxon>
        <taxon>Pseudomonadales</taxon>
        <taxon>Pseudomonadaceae</taxon>
        <taxon>Pseudomonas</taxon>
    </lineage>
</organism>
<proteinExistence type="inferred from homology"/>
<dbReference type="EMBL" id="CP000094">
    <property type="protein sequence ID" value="ABA76802.1"/>
    <property type="molecule type" value="Genomic_DNA"/>
</dbReference>
<dbReference type="RefSeq" id="WP_011336171.1">
    <property type="nucleotide sequence ID" value="NC_007492.2"/>
</dbReference>
<dbReference type="SMR" id="Q3K602"/>
<dbReference type="KEGG" id="pfo:Pfl01_5065"/>
<dbReference type="eggNOG" id="COG0096">
    <property type="taxonomic scope" value="Bacteria"/>
</dbReference>
<dbReference type="HOGENOM" id="CLU_098428_0_0_6"/>
<dbReference type="Proteomes" id="UP000002704">
    <property type="component" value="Chromosome"/>
</dbReference>
<dbReference type="GO" id="GO:1990904">
    <property type="term" value="C:ribonucleoprotein complex"/>
    <property type="evidence" value="ECO:0007669"/>
    <property type="project" value="UniProtKB-KW"/>
</dbReference>
<dbReference type="GO" id="GO:0005840">
    <property type="term" value="C:ribosome"/>
    <property type="evidence" value="ECO:0007669"/>
    <property type="project" value="UniProtKB-KW"/>
</dbReference>
<dbReference type="GO" id="GO:0019843">
    <property type="term" value="F:rRNA binding"/>
    <property type="evidence" value="ECO:0007669"/>
    <property type="project" value="UniProtKB-UniRule"/>
</dbReference>
<dbReference type="GO" id="GO:0003735">
    <property type="term" value="F:structural constituent of ribosome"/>
    <property type="evidence" value="ECO:0007669"/>
    <property type="project" value="InterPro"/>
</dbReference>
<dbReference type="GO" id="GO:0006412">
    <property type="term" value="P:translation"/>
    <property type="evidence" value="ECO:0007669"/>
    <property type="project" value="UniProtKB-UniRule"/>
</dbReference>
<dbReference type="FunFam" id="3.30.1370.30:FF:000003">
    <property type="entry name" value="30S ribosomal protein S8"/>
    <property type="match status" value="1"/>
</dbReference>
<dbReference type="FunFam" id="3.30.1490.10:FF:000001">
    <property type="entry name" value="30S ribosomal protein S8"/>
    <property type="match status" value="1"/>
</dbReference>
<dbReference type="Gene3D" id="3.30.1370.30">
    <property type="match status" value="1"/>
</dbReference>
<dbReference type="Gene3D" id="3.30.1490.10">
    <property type="match status" value="1"/>
</dbReference>
<dbReference type="HAMAP" id="MF_01302_B">
    <property type="entry name" value="Ribosomal_uS8_B"/>
    <property type="match status" value="1"/>
</dbReference>
<dbReference type="InterPro" id="IPR000630">
    <property type="entry name" value="Ribosomal_uS8"/>
</dbReference>
<dbReference type="InterPro" id="IPR047863">
    <property type="entry name" value="Ribosomal_uS8_CS"/>
</dbReference>
<dbReference type="InterPro" id="IPR035987">
    <property type="entry name" value="Ribosomal_uS8_sf"/>
</dbReference>
<dbReference type="NCBIfam" id="NF001109">
    <property type="entry name" value="PRK00136.1"/>
    <property type="match status" value="1"/>
</dbReference>
<dbReference type="PANTHER" id="PTHR11758">
    <property type="entry name" value="40S RIBOSOMAL PROTEIN S15A"/>
    <property type="match status" value="1"/>
</dbReference>
<dbReference type="Pfam" id="PF00410">
    <property type="entry name" value="Ribosomal_S8"/>
    <property type="match status" value="1"/>
</dbReference>
<dbReference type="SUPFAM" id="SSF56047">
    <property type="entry name" value="Ribosomal protein S8"/>
    <property type="match status" value="1"/>
</dbReference>
<dbReference type="PROSITE" id="PS00053">
    <property type="entry name" value="RIBOSOMAL_S8"/>
    <property type="match status" value="1"/>
</dbReference>
<keyword id="KW-0687">Ribonucleoprotein</keyword>
<keyword id="KW-0689">Ribosomal protein</keyword>
<keyword id="KW-0694">RNA-binding</keyword>
<keyword id="KW-0699">rRNA-binding</keyword>